<name>DER_THEVB</name>
<gene>
    <name evidence="1" type="primary">der</name>
    <name type="synonym">engA</name>
    <name type="ordered locus">tlr0878</name>
</gene>
<dbReference type="EMBL" id="BA000039">
    <property type="protein sequence ID" value="BAC08430.1"/>
    <property type="molecule type" value="Genomic_DNA"/>
</dbReference>
<dbReference type="RefSeq" id="NP_681668.1">
    <property type="nucleotide sequence ID" value="NC_004113.1"/>
</dbReference>
<dbReference type="RefSeq" id="WP_011056722.1">
    <property type="nucleotide sequence ID" value="NC_004113.1"/>
</dbReference>
<dbReference type="SMR" id="Q8DKI1"/>
<dbReference type="STRING" id="197221.gene:10747470"/>
<dbReference type="EnsemblBacteria" id="BAC08430">
    <property type="protein sequence ID" value="BAC08430"/>
    <property type="gene ID" value="BAC08430"/>
</dbReference>
<dbReference type="KEGG" id="tel:tlr0878"/>
<dbReference type="PATRIC" id="fig|197221.4.peg.924"/>
<dbReference type="eggNOG" id="COG1160">
    <property type="taxonomic scope" value="Bacteria"/>
</dbReference>
<dbReference type="Proteomes" id="UP000000440">
    <property type="component" value="Chromosome"/>
</dbReference>
<dbReference type="GO" id="GO:0005525">
    <property type="term" value="F:GTP binding"/>
    <property type="evidence" value="ECO:0007669"/>
    <property type="project" value="UniProtKB-UniRule"/>
</dbReference>
<dbReference type="GO" id="GO:0043022">
    <property type="term" value="F:ribosome binding"/>
    <property type="evidence" value="ECO:0007669"/>
    <property type="project" value="TreeGrafter"/>
</dbReference>
<dbReference type="GO" id="GO:0042254">
    <property type="term" value="P:ribosome biogenesis"/>
    <property type="evidence" value="ECO:0007669"/>
    <property type="project" value="UniProtKB-KW"/>
</dbReference>
<dbReference type="CDD" id="cd01894">
    <property type="entry name" value="EngA1"/>
    <property type="match status" value="1"/>
</dbReference>
<dbReference type="CDD" id="cd01895">
    <property type="entry name" value="EngA2"/>
    <property type="match status" value="1"/>
</dbReference>
<dbReference type="FunFam" id="3.30.300.20:FF:000004">
    <property type="entry name" value="GTPase Der"/>
    <property type="match status" value="1"/>
</dbReference>
<dbReference type="FunFam" id="3.40.50.300:FF:000040">
    <property type="entry name" value="GTPase Der"/>
    <property type="match status" value="1"/>
</dbReference>
<dbReference type="FunFam" id="3.40.50.300:FF:001185">
    <property type="entry name" value="GTPase Der"/>
    <property type="match status" value="1"/>
</dbReference>
<dbReference type="Gene3D" id="3.30.300.20">
    <property type="match status" value="1"/>
</dbReference>
<dbReference type="Gene3D" id="3.40.50.300">
    <property type="entry name" value="P-loop containing nucleotide triphosphate hydrolases"/>
    <property type="match status" value="2"/>
</dbReference>
<dbReference type="HAMAP" id="MF_00195">
    <property type="entry name" value="GTPase_Der"/>
    <property type="match status" value="1"/>
</dbReference>
<dbReference type="InterPro" id="IPR031166">
    <property type="entry name" value="G_ENGA"/>
</dbReference>
<dbReference type="InterPro" id="IPR006073">
    <property type="entry name" value="GTP-bd"/>
</dbReference>
<dbReference type="InterPro" id="IPR016484">
    <property type="entry name" value="GTPase_Der"/>
</dbReference>
<dbReference type="InterPro" id="IPR032859">
    <property type="entry name" value="KH_dom-like"/>
</dbReference>
<dbReference type="InterPro" id="IPR015946">
    <property type="entry name" value="KH_dom-like_a/b"/>
</dbReference>
<dbReference type="InterPro" id="IPR027417">
    <property type="entry name" value="P-loop_NTPase"/>
</dbReference>
<dbReference type="InterPro" id="IPR005225">
    <property type="entry name" value="Small_GTP-bd"/>
</dbReference>
<dbReference type="NCBIfam" id="TIGR03594">
    <property type="entry name" value="GTPase_EngA"/>
    <property type="match status" value="1"/>
</dbReference>
<dbReference type="NCBIfam" id="TIGR00231">
    <property type="entry name" value="small_GTP"/>
    <property type="match status" value="2"/>
</dbReference>
<dbReference type="PANTHER" id="PTHR43834">
    <property type="entry name" value="GTPASE DER"/>
    <property type="match status" value="1"/>
</dbReference>
<dbReference type="PANTHER" id="PTHR43834:SF6">
    <property type="entry name" value="GTPASE DER"/>
    <property type="match status" value="1"/>
</dbReference>
<dbReference type="Pfam" id="PF14714">
    <property type="entry name" value="KH_dom-like"/>
    <property type="match status" value="1"/>
</dbReference>
<dbReference type="Pfam" id="PF01926">
    <property type="entry name" value="MMR_HSR1"/>
    <property type="match status" value="2"/>
</dbReference>
<dbReference type="PIRSF" id="PIRSF006485">
    <property type="entry name" value="GTP-binding_EngA"/>
    <property type="match status" value="1"/>
</dbReference>
<dbReference type="PRINTS" id="PR00326">
    <property type="entry name" value="GTP1OBG"/>
</dbReference>
<dbReference type="SUPFAM" id="SSF52540">
    <property type="entry name" value="P-loop containing nucleoside triphosphate hydrolases"/>
    <property type="match status" value="2"/>
</dbReference>
<dbReference type="PROSITE" id="PS51712">
    <property type="entry name" value="G_ENGA"/>
    <property type="match status" value="2"/>
</dbReference>
<keyword id="KW-0342">GTP-binding</keyword>
<keyword id="KW-0547">Nucleotide-binding</keyword>
<keyword id="KW-1185">Reference proteome</keyword>
<keyword id="KW-0677">Repeat</keyword>
<keyword id="KW-0690">Ribosome biogenesis</keyword>
<protein>
    <recommendedName>
        <fullName evidence="1">GTPase Der</fullName>
    </recommendedName>
    <alternativeName>
        <fullName evidence="1">GTP-binding protein EngA</fullName>
    </alternativeName>
</protein>
<reference key="1">
    <citation type="journal article" date="2002" name="DNA Res.">
        <title>Complete genome structure of the thermophilic cyanobacterium Thermosynechococcus elongatus BP-1.</title>
        <authorList>
            <person name="Nakamura Y."/>
            <person name="Kaneko T."/>
            <person name="Sato S."/>
            <person name="Ikeuchi M."/>
            <person name="Katoh H."/>
            <person name="Sasamoto S."/>
            <person name="Watanabe A."/>
            <person name="Iriguchi M."/>
            <person name="Kawashima K."/>
            <person name="Kimura T."/>
            <person name="Kishida Y."/>
            <person name="Kiyokawa C."/>
            <person name="Kohara M."/>
            <person name="Matsumoto M."/>
            <person name="Matsuno A."/>
            <person name="Nakazaki N."/>
            <person name="Shimpo S."/>
            <person name="Sugimoto M."/>
            <person name="Takeuchi C."/>
            <person name="Yamada M."/>
            <person name="Tabata S."/>
        </authorList>
    </citation>
    <scope>NUCLEOTIDE SEQUENCE [LARGE SCALE GENOMIC DNA]</scope>
    <source>
        <strain>NIES-2133 / IAM M-273 / BP-1</strain>
    </source>
</reference>
<evidence type="ECO:0000255" key="1">
    <source>
        <dbReference type="HAMAP-Rule" id="MF_00195"/>
    </source>
</evidence>
<feature type="chain" id="PRO_0000179061" description="GTPase Der">
    <location>
        <begin position="1"/>
        <end position="449"/>
    </location>
</feature>
<feature type="domain" description="EngA-type G 1">
    <location>
        <begin position="4"/>
        <end position="169"/>
    </location>
</feature>
<feature type="domain" description="EngA-type G 2">
    <location>
        <begin position="177"/>
        <end position="353"/>
    </location>
</feature>
<feature type="domain" description="KH-like" evidence="1">
    <location>
        <begin position="354"/>
        <end position="439"/>
    </location>
</feature>
<feature type="binding site" evidence="1">
    <location>
        <begin position="10"/>
        <end position="17"/>
    </location>
    <ligand>
        <name>GTP</name>
        <dbReference type="ChEBI" id="CHEBI:37565"/>
        <label>1</label>
    </ligand>
</feature>
<feature type="binding site" evidence="1">
    <location>
        <begin position="57"/>
        <end position="61"/>
    </location>
    <ligand>
        <name>GTP</name>
        <dbReference type="ChEBI" id="CHEBI:37565"/>
        <label>1</label>
    </ligand>
</feature>
<feature type="binding site" evidence="1">
    <location>
        <begin position="120"/>
        <end position="123"/>
    </location>
    <ligand>
        <name>GTP</name>
        <dbReference type="ChEBI" id="CHEBI:37565"/>
        <label>1</label>
    </ligand>
</feature>
<feature type="binding site" evidence="1">
    <location>
        <begin position="183"/>
        <end position="190"/>
    </location>
    <ligand>
        <name>GTP</name>
        <dbReference type="ChEBI" id="CHEBI:37565"/>
        <label>2</label>
    </ligand>
</feature>
<feature type="binding site" evidence="1">
    <location>
        <begin position="230"/>
        <end position="234"/>
    </location>
    <ligand>
        <name>GTP</name>
        <dbReference type="ChEBI" id="CHEBI:37565"/>
        <label>2</label>
    </ligand>
</feature>
<feature type="binding site" evidence="1">
    <location>
        <begin position="295"/>
        <end position="298"/>
    </location>
    <ligand>
        <name>GTP</name>
        <dbReference type="ChEBI" id="CHEBI:37565"/>
        <label>2</label>
    </ligand>
</feature>
<sequence>MALPIVAVVGRPNVGKSTFVNRLAGERDAIVHDEPGVTRDRTYRPAFWQDREFLVVDTGGLVFDDDSDFLPLIRQQAELALQEATAAIFVVDGQAGPTALDYEIAAWLRQLSLPVLVAVNKCESRQMGQVQAAEFWSLGLGEPYPISSIHGSGTGELLDQLITYLPAGETLPEAPEIQVAIAGRPNVGKSSLLNALIGSDRAIVSPISGTTRDAIDTVIEHGGTQYRFIDTAGIRKRTHVAYGPEMFSVHRAFKAIHRSDVVLLVLDALEEITEQDQRLAGHIADQGRACVLIVNKWDAVLDKDTYTINAYRDRLYQRLHFLEWADALFVSAHTGQRLEKIFAAVDAAVEQHRRRVTTAVVNDVIQEALHWHTPPATRQGRQGKIYYATQVATQPPTFAIFVNDAKLFKENYRRYIESQIRQQLGFRGTPIRLLWRSKKPREAAELVAR</sequence>
<proteinExistence type="inferred from homology"/>
<comment type="function">
    <text evidence="1">GTPase that plays an essential role in the late steps of ribosome biogenesis.</text>
</comment>
<comment type="subunit">
    <text evidence="1">Associates with the 50S ribosomal subunit.</text>
</comment>
<comment type="similarity">
    <text evidence="1">Belongs to the TRAFAC class TrmE-Era-EngA-EngB-Septin-like GTPase superfamily. EngA (Der) GTPase family.</text>
</comment>
<accession>Q8DKI1</accession>
<organism>
    <name type="scientific">Thermosynechococcus vestitus (strain NIES-2133 / IAM M-273 / BP-1)</name>
    <dbReference type="NCBI Taxonomy" id="197221"/>
    <lineage>
        <taxon>Bacteria</taxon>
        <taxon>Bacillati</taxon>
        <taxon>Cyanobacteriota</taxon>
        <taxon>Cyanophyceae</taxon>
        <taxon>Acaryochloridales</taxon>
        <taxon>Thermosynechococcaceae</taxon>
        <taxon>Thermosynechococcus</taxon>
    </lineage>
</organism>